<organism>
    <name type="scientific">Bacillus velezensis (strain DSM 23117 / BGSC 10A6 / LMG 26770 / FZB42)</name>
    <name type="common">Bacillus amyloliquefaciens subsp. plantarum</name>
    <dbReference type="NCBI Taxonomy" id="326423"/>
    <lineage>
        <taxon>Bacteria</taxon>
        <taxon>Bacillati</taxon>
        <taxon>Bacillota</taxon>
        <taxon>Bacilli</taxon>
        <taxon>Bacillales</taxon>
        <taxon>Bacillaceae</taxon>
        <taxon>Bacillus</taxon>
        <taxon>Bacillus amyloliquefaciens group</taxon>
    </lineage>
</organism>
<proteinExistence type="inferred from homology"/>
<sequence>MYGGKSAEHNVSLQTALAVTKALNTEKFDIHPIYITEKGEWQRGPLLTEPVSNVKMLQLEQNGESFALSALNREMFPEASPDEKAPIDVVFPLLHGPNGEDGTIQGLLELLNVPYVGNGVLASSAGMDKVIMKHLFAQAGLPQAKYAAFLKKDWKQTPDSCLQQVEKELGYPCFVKPANLGSSVGISKCRNREELEKAFELAFEYDRKIVVEEGIAGREIEIGVLGNDEPKCSAVGEIAPKTDFYDYKAKYEDGDTDLMIPAQVTDEQYAEISEMAIKAFKAIDGSGLVRADFFLTNDGQVLINEVNTMPGFTPFSMFPLLWKEAGVDYSDLIEQLVELAKERHAEKQLIKHTF</sequence>
<gene>
    <name evidence="2" type="primary">ddl</name>
    <name type="ordered locus">RBAM_004900</name>
</gene>
<feature type="chain" id="PRO_0000341058" description="D-alanine--D-alanine ligase">
    <location>
        <begin position="1"/>
        <end position="354"/>
    </location>
</feature>
<feature type="domain" description="ATP-grasp" evidence="2">
    <location>
        <begin position="133"/>
        <end position="338"/>
    </location>
</feature>
<feature type="binding site" evidence="2">
    <location>
        <begin position="166"/>
        <end position="221"/>
    </location>
    <ligand>
        <name>ATP</name>
        <dbReference type="ChEBI" id="CHEBI:30616"/>
    </ligand>
</feature>
<feature type="binding site" evidence="2">
    <location>
        <position position="292"/>
    </location>
    <ligand>
        <name>Mg(2+)</name>
        <dbReference type="ChEBI" id="CHEBI:18420"/>
        <label>1</label>
    </ligand>
</feature>
<feature type="binding site" evidence="2">
    <location>
        <position position="305"/>
    </location>
    <ligand>
        <name>Mg(2+)</name>
        <dbReference type="ChEBI" id="CHEBI:18420"/>
        <label>1</label>
    </ligand>
</feature>
<feature type="binding site" evidence="2">
    <location>
        <position position="305"/>
    </location>
    <ligand>
        <name>Mg(2+)</name>
        <dbReference type="ChEBI" id="CHEBI:18420"/>
        <label>2</label>
    </ligand>
</feature>
<feature type="binding site" evidence="2">
    <location>
        <position position="307"/>
    </location>
    <ligand>
        <name>Mg(2+)</name>
        <dbReference type="ChEBI" id="CHEBI:18420"/>
        <label>2</label>
    </ligand>
</feature>
<comment type="function">
    <text evidence="2">Cell wall formation.</text>
</comment>
<comment type="catalytic activity">
    <reaction evidence="2">
        <text>2 D-alanine + ATP = D-alanyl-D-alanine + ADP + phosphate + H(+)</text>
        <dbReference type="Rhea" id="RHEA:11224"/>
        <dbReference type="ChEBI" id="CHEBI:15378"/>
        <dbReference type="ChEBI" id="CHEBI:30616"/>
        <dbReference type="ChEBI" id="CHEBI:43474"/>
        <dbReference type="ChEBI" id="CHEBI:57416"/>
        <dbReference type="ChEBI" id="CHEBI:57822"/>
        <dbReference type="ChEBI" id="CHEBI:456216"/>
        <dbReference type="EC" id="6.3.2.4"/>
    </reaction>
</comment>
<comment type="cofactor">
    <cofactor evidence="1">
        <name>Mg(2+)</name>
        <dbReference type="ChEBI" id="CHEBI:18420"/>
    </cofactor>
    <cofactor evidence="1">
        <name>Mn(2+)</name>
        <dbReference type="ChEBI" id="CHEBI:29035"/>
    </cofactor>
    <text evidence="1">Binds 2 magnesium or manganese ions per subunit.</text>
</comment>
<comment type="pathway">
    <text evidence="2">Cell wall biogenesis; peptidoglycan biosynthesis.</text>
</comment>
<comment type="subcellular location">
    <subcellularLocation>
        <location evidence="2">Cytoplasm</location>
    </subcellularLocation>
</comment>
<comment type="similarity">
    <text evidence="2">Belongs to the D-alanine--D-alanine ligase family.</text>
</comment>
<name>DDL_BACVZ</name>
<dbReference type="EC" id="6.3.2.4" evidence="2"/>
<dbReference type="EMBL" id="CP000560">
    <property type="protein sequence ID" value="ABS72889.1"/>
    <property type="molecule type" value="Genomic_DNA"/>
</dbReference>
<dbReference type="SMR" id="A7Z1L3"/>
<dbReference type="KEGG" id="bay:RBAM_004900"/>
<dbReference type="HOGENOM" id="CLU_039268_0_0_9"/>
<dbReference type="UniPathway" id="UPA00219"/>
<dbReference type="Proteomes" id="UP000001120">
    <property type="component" value="Chromosome"/>
</dbReference>
<dbReference type="GO" id="GO:0005829">
    <property type="term" value="C:cytosol"/>
    <property type="evidence" value="ECO:0007669"/>
    <property type="project" value="TreeGrafter"/>
</dbReference>
<dbReference type="GO" id="GO:0005524">
    <property type="term" value="F:ATP binding"/>
    <property type="evidence" value="ECO:0007669"/>
    <property type="project" value="UniProtKB-KW"/>
</dbReference>
<dbReference type="GO" id="GO:0008716">
    <property type="term" value="F:D-alanine-D-alanine ligase activity"/>
    <property type="evidence" value="ECO:0007669"/>
    <property type="project" value="UniProtKB-UniRule"/>
</dbReference>
<dbReference type="GO" id="GO:0046872">
    <property type="term" value="F:metal ion binding"/>
    <property type="evidence" value="ECO:0007669"/>
    <property type="project" value="UniProtKB-KW"/>
</dbReference>
<dbReference type="GO" id="GO:0071555">
    <property type="term" value="P:cell wall organization"/>
    <property type="evidence" value="ECO:0007669"/>
    <property type="project" value="UniProtKB-KW"/>
</dbReference>
<dbReference type="GO" id="GO:0009252">
    <property type="term" value="P:peptidoglycan biosynthetic process"/>
    <property type="evidence" value="ECO:0007669"/>
    <property type="project" value="UniProtKB-UniRule"/>
</dbReference>
<dbReference type="GO" id="GO:0008360">
    <property type="term" value="P:regulation of cell shape"/>
    <property type="evidence" value="ECO:0007669"/>
    <property type="project" value="UniProtKB-KW"/>
</dbReference>
<dbReference type="FunFam" id="3.30.1490.20:FF:000007">
    <property type="entry name" value="D-alanine--D-alanine ligase"/>
    <property type="match status" value="1"/>
</dbReference>
<dbReference type="FunFam" id="3.30.470.20:FF:000008">
    <property type="entry name" value="D-alanine--D-alanine ligase"/>
    <property type="match status" value="1"/>
</dbReference>
<dbReference type="Gene3D" id="3.40.50.20">
    <property type="match status" value="1"/>
</dbReference>
<dbReference type="Gene3D" id="3.30.1490.20">
    <property type="entry name" value="ATP-grasp fold, A domain"/>
    <property type="match status" value="1"/>
</dbReference>
<dbReference type="Gene3D" id="3.30.470.20">
    <property type="entry name" value="ATP-grasp fold, B domain"/>
    <property type="match status" value="1"/>
</dbReference>
<dbReference type="HAMAP" id="MF_00047">
    <property type="entry name" value="Dala_Dala_lig"/>
    <property type="match status" value="1"/>
</dbReference>
<dbReference type="InterPro" id="IPR011761">
    <property type="entry name" value="ATP-grasp"/>
</dbReference>
<dbReference type="InterPro" id="IPR013815">
    <property type="entry name" value="ATP_grasp_subdomain_1"/>
</dbReference>
<dbReference type="InterPro" id="IPR000291">
    <property type="entry name" value="D-Ala_lig_Van_CS"/>
</dbReference>
<dbReference type="InterPro" id="IPR005905">
    <property type="entry name" value="D_ala_D_ala"/>
</dbReference>
<dbReference type="InterPro" id="IPR011095">
    <property type="entry name" value="Dala_Dala_lig_C"/>
</dbReference>
<dbReference type="InterPro" id="IPR011127">
    <property type="entry name" value="Dala_Dala_lig_N"/>
</dbReference>
<dbReference type="InterPro" id="IPR016185">
    <property type="entry name" value="PreATP-grasp_dom_sf"/>
</dbReference>
<dbReference type="NCBIfam" id="TIGR01205">
    <property type="entry name" value="D_ala_D_alaTIGR"/>
    <property type="match status" value="1"/>
</dbReference>
<dbReference type="NCBIfam" id="NF002378">
    <property type="entry name" value="PRK01372.1"/>
    <property type="match status" value="1"/>
</dbReference>
<dbReference type="NCBIfam" id="NF002526">
    <property type="entry name" value="PRK01966.1-2"/>
    <property type="match status" value="1"/>
</dbReference>
<dbReference type="NCBIfam" id="NF002528">
    <property type="entry name" value="PRK01966.1-4"/>
    <property type="match status" value="1"/>
</dbReference>
<dbReference type="PANTHER" id="PTHR23132">
    <property type="entry name" value="D-ALANINE--D-ALANINE LIGASE"/>
    <property type="match status" value="1"/>
</dbReference>
<dbReference type="PANTHER" id="PTHR23132:SF25">
    <property type="entry name" value="D-ALANINE--D-ALANINE LIGASE A"/>
    <property type="match status" value="1"/>
</dbReference>
<dbReference type="Pfam" id="PF07478">
    <property type="entry name" value="Dala_Dala_lig_C"/>
    <property type="match status" value="1"/>
</dbReference>
<dbReference type="Pfam" id="PF01820">
    <property type="entry name" value="Dala_Dala_lig_N"/>
    <property type="match status" value="1"/>
</dbReference>
<dbReference type="PIRSF" id="PIRSF039102">
    <property type="entry name" value="Ddl/VanB"/>
    <property type="match status" value="1"/>
</dbReference>
<dbReference type="SUPFAM" id="SSF56059">
    <property type="entry name" value="Glutathione synthetase ATP-binding domain-like"/>
    <property type="match status" value="1"/>
</dbReference>
<dbReference type="SUPFAM" id="SSF52440">
    <property type="entry name" value="PreATP-grasp domain"/>
    <property type="match status" value="1"/>
</dbReference>
<dbReference type="PROSITE" id="PS50975">
    <property type="entry name" value="ATP_GRASP"/>
    <property type="match status" value="1"/>
</dbReference>
<dbReference type="PROSITE" id="PS00843">
    <property type="entry name" value="DALA_DALA_LIGASE_1"/>
    <property type="match status" value="1"/>
</dbReference>
<dbReference type="PROSITE" id="PS00844">
    <property type="entry name" value="DALA_DALA_LIGASE_2"/>
    <property type="match status" value="1"/>
</dbReference>
<keyword id="KW-0067">ATP-binding</keyword>
<keyword id="KW-0133">Cell shape</keyword>
<keyword id="KW-0961">Cell wall biogenesis/degradation</keyword>
<keyword id="KW-0963">Cytoplasm</keyword>
<keyword id="KW-0436">Ligase</keyword>
<keyword id="KW-0460">Magnesium</keyword>
<keyword id="KW-0464">Manganese</keyword>
<keyword id="KW-0479">Metal-binding</keyword>
<keyword id="KW-0547">Nucleotide-binding</keyword>
<keyword id="KW-0573">Peptidoglycan synthesis</keyword>
<accession>A7Z1L3</accession>
<protein>
    <recommendedName>
        <fullName evidence="2">D-alanine--D-alanine ligase</fullName>
        <ecNumber evidence="2">6.3.2.4</ecNumber>
    </recommendedName>
    <alternativeName>
        <fullName evidence="2">D-Ala-D-Ala ligase</fullName>
    </alternativeName>
    <alternativeName>
        <fullName evidence="2">D-alanylalanine synthetase</fullName>
    </alternativeName>
</protein>
<reference key="1">
    <citation type="journal article" date="2007" name="Nat. Biotechnol.">
        <title>Comparative analysis of the complete genome sequence of the plant growth-promoting bacterium Bacillus amyloliquefaciens FZB42.</title>
        <authorList>
            <person name="Chen X.H."/>
            <person name="Koumoutsi A."/>
            <person name="Scholz R."/>
            <person name="Eisenreich A."/>
            <person name="Schneider K."/>
            <person name="Heinemeyer I."/>
            <person name="Morgenstern B."/>
            <person name="Voss B."/>
            <person name="Hess W.R."/>
            <person name="Reva O."/>
            <person name="Junge H."/>
            <person name="Voigt B."/>
            <person name="Jungblut P.R."/>
            <person name="Vater J."/>
            <person name="Suessmuth R."/>
            <person name="Liesegang H."/>
            <person name="Strittmatter A."/>
            <person name="Gottschalk G."/>
            <person name="Borriss R."/>
        </authorList>
    </citation>
    <scope>NUCLEOTIDE SEQUENCE [LARGE SCALE GENOMIC DNA]</scope>
    <source>
        <strain>DSM 23117 / BGSC 10A6 / LMG 26770 / FZB42</strain>
    </source>
</reference>
<evidence type="ECO:0000250" key="1"/>
<evidence type="ECO:0000255" key="2">
    <source>
        <dbReference type="HAMAP-Rule" id="MF_00047"/>
    </source>
</evidence>